<reference key="1">
    <citation type="journal article" date="2011" name="Stand. Genomic Sci.">
        <title>Complete genome sequence of Rhodospirillum rubrum type strain (S1).</title>
        <authorList>
            <person name="Munk A.C."/>
            <person name="Copeland A."/>
            <person name="Lucas S."/>
            <person name="Lapidus A."/>
            <person name="Del Rio T.G."/>
            <person name="Barry K."/>
            <person name="Detter J.C."/>
            <person name="Hammon N."/>
            <person name="Israni S."/>
            <person name="Pitluck S."/>
            <person name="Brettin T."/>
            <person name="Bruce D."/>
            <person name="Han C."/>
            <person name="Tapia R."/>
            <person name="Gilna P."/>
            <person name="Schmutz J."/>
            <person name="Larimer F."/>
            <person name="Land M."/>
            <person name="Kyrpides N.C."/>
            <person name="Mavromatis K."/>
            <person name="Richardson P."/>
            <person name="Rohde M."/>
            <person name="Goeker M."/>
            <person name="Klenk H.P."/>
            <person name="Zhang Y."/>
            <person name="Roberts G.P."/>
            <person name="Reslewic S."/>
            <person name="Schwartz D.C."/>
        </authorList>
    </citation>
    <scope>NUCLEOTIDE SEQUENCE [LARGE SCALE GENOMIC DNA]</scope>
    <source>
        <strain>ATCC 11170 / ATH 1.1.1 / DSM 467 / LMG 4362 / NCIMB 8255 / S1</strain>
    </source>
</reference>
<accession>Q2RWY4</accession>
<evidence type="ECO:0000255" key="1">
    <source>
        <dbReference type="HAMAP-Rule" id="MF_01576"/>
    </source>
</evidence>
<feature type="chain" id="PRO_0000268478" description="Bifunctional protein FolD">
    <location>
        <begin position="1"/>
        <end position="296"/>
    </location>
</feature>
<feature type="binding site" evidence="1">
    <location>
        <begin position="170"/>
        <end position="172"/>
    </location>
    <ligand>
        <name>NADP(+)</name>
        <dbReference type="ChEBI" id="CHEBI:58349"/>
    </ligand>
</feature>
<feature type="binding site" evidence="1">
    <location>
        <position position="195"/>
    </location>
    <ligand>
        <name>NADP(+)</name>
        <dbReference type="ChEBI" id="CHEBI:58349"/>
    </ligand>
</feature>
<comment type="function">
    <text evidence="1">Catalyzes the oxidation of 5,10-methylenetetrahydrofolate to 5,10-methenyltetrahydrofolate and then the hydrolysis of 5,10-methenyltetrahydrofolate to 10-formyltetrahydrofolate.</text>
</comment>
<comment type="catalytic activity">
    <reaction evidence="1">
        <text>(6R)-5,10-methylene-5,6,7,8-tetrahydrofolate + NADP(+) = (6R)-5,10-methenyltetrahydrofolate + NADPH</text>
        <dbReference type="Rhea" id="RHEA:22812"/>
        <dbReference type="ChEBI" id="CHEBI:15636"/>
        <dbReference type="ChEBI" id="CHEBI:57455"/>
        <dbReference type="ChEBI" id="CHEBI:57783"/>
        <dbReference type="ChEBI" id="CHEBI:58349"/>
        <dbReference type="EC" id="1.5.1.5"/>
    </reaction>
</comment>
<comment type="catalytic activity">
    <reaction evidence="1">
        <text>(6R)-5,10-methenyltetrahydrofolate + H2O = (6R)-10-formyltetrahydrofolate + H(+)</text>
        <dbReference type="Rhea" id="RHEA:23700"/>
        <dbReference type="ChEBI" id="CHEBI:15377"/>
        <dbReference type="ChEBI" id="CHEBI:15378"/>
        <dbReference type="ChEBI" id="CHEBI:57455"/>
        <dbReference type="ChEBI" id="CHEBI:195366"/>
        <dbReference type="EC" id="3.5.4.9"/>
    </reaction>
</comment>
<comment type="pathway">
    <text evidence="1">One-carbon metabolism; tetrahydrofolate interconversion.</text>
</comment>
<comment type="subunit">
    <text evidence="1">Homodimer.</text>
</comment>
<comment type="similarity">
    <text evidence="1">Belongs to the tetrahydrofolate dehydrogenase/cyclohydrolase family.</text>
</comment>
<protein>
    <recommendedName>
        <fullName evidence="1">Bifunctional protein FolD</fullName>
    </recommendedName>
    <domain>
        <recommendedName>
            <fullName evidence="1">Methylenetetrahydrofolate dehydrogenase</fullName>
            <ecNumber evidence="1">1.5.1.5</ecNumber>
        </recommendedName>
    </domain>
    <domain>
        <recommendedName>
            <fullName evidence="1">Methenyltetrahydrofolate cyclohydrolase</fullName>
            <ecNumber evidence="1">3.5.4.9</ecNumber>
        </recommendedName>
    </domain>
</protein>
<keyword id="KW-0028">Amino-acid biosynthesis</keyword>
<keyword id="KW-0368">Histidine biosynthesis</keyword>
<keyword id="KW-0378">Hydrolase</keyword>
<keyword id="KW-0486">Methionine biosynthesis</keyword>
<keyword id="KW-0511">Multifunctional enzyme</keyword>
<keyword id="KW-0521">NADP</keyword>
<keyword id="KW-0554">One-carbon metabolism</keyword>
<keyword id="KW-0560">Oxidoreductase</keyword>
<keyword id="KW-0658">Purine biosynthesis</keyword>
<keyword id="KW-1185">Reference proteome</keyword>
<sequence length="296" mass="30448">MGAHLIDGKAIAQQLRERIAQEVADLKAHRGLVPGLAVVLVGEDAASQVYVGSKEKMAVAVGMHSVVCRLAATTSEAEVLAKVEALNADPTIDGILVQLPLPAHIDEDKILLAIDPDKDVDGFHPVNVGRLSIGQSNGEHGMVPCTPKGCLMLLKGVLGDLTGKTALVIGRSNIVGKPMAQLLLSANCTVTLAHSRSRDLPDLCRRMDIVVAAVGRPEMVKGDWLKPGAVVIDVGMNRLPAAPGAEKGKLVGDVDYASAAAVAGAITPVPGGVGPMTIACLLANTLEACKARGAGA</sequence>
<proteinExistence type="inferred from homology"/>
<dbReference type="EC" id="1.5.1.5" evidence="1"/>
<dbReference type="EC" id="3.5.4.9" evidence="1"/>
<dbReference type="EMBL" id="CP000230">
    <property type="protein sequence ID" value="ABC21361.1"/>
    <property type="molecule type" value="Genomic_DNA"/>
</dbReference>
<dbReference type="RefSeq" id="WP_011388315.1">
    <property type="nucleotide sequence ID" value="NC_007643.1"/>
</dbReference>
<dbReference type="RefSeq" id="YP_425648.1">
    <property type="nucleotide sequence ID" value="NC_007643.1"/>
</dbReference>
<dbReference type="SMR" id="Q2RWY4"/>
<dbReference type="STRING" id="269796.Rru_A0557"/>
<dbReference type="EnsemblBacteria" id="ABC21361">
    <property type="protein sequence ID" value="ABC21361"/>
    <property type="gene ID" value="Rru_A0557"/>
</dbReference>
<dbReference type="KEGG" id="rru:Rru_A0557"/>
<dbReference type="PATRIC" id="fig|269796.9.peg.610"/>
<dbReference type="eggNOG" id="COG0190">
    <property type="taxonomic scope" value="Bacteria"/>
</dbReference>
<dbReference type="HOGENOM" id="CLU_034045_1_2_5"/>
<dbReference type="PhylomeDB" id="Q2RWY4"/>
<dbReference type="UniPathway" id="UPA00193"/>
<dbReference type="Proteomes" id="UP000001929">
    <property type="component" value="Chromosome"/>
</dbReference>
<dbReference type="GO" id="GO:0005829">
    <property type="term" value="C:cytosol"/>
    <property type="evidence" value="ECO:0007669"/>
    <property type="project" value="TreeGrafter"/>
</dbReference>
<dbReference type="GO" id="GO:0004477">
    <property type="term" value="F:methenyltetrahydrofolate cyclohydrolase activity"/>
    <property type="evidence" value="ECO:0007669"/>
    <property type="project" value="UniProtKB-UniRule"/>
</dbReference>
<dbReference type="GO" id="GO:0004488">
    <property type="term" value="F:methylenetetrahydrofolate dehydrogenase (NADP+) activity"/>
    <property type="evidence" value="ECO:0007669"/>
    <property type="project" value="UniProtKB-UniRule"/>
</dbReference>
<dbReference type="GO" id="GO:0000105">
    <property type="term" value="P:L-histidine biosynthetic process"/>
    <property type="evidence" value="ECO:0007669"/>
    <property type="project" value="UniProtKB-KW"/>
</dbReference>
<dbReference type="GO" id="GO:0009086">
    <property type="term" value="P:methionine biosynthetic process"/>
    <property type="evidence" value="ECO:0007669"/>
    <property type="project" value="UniProtKB-KW"/>
</dbReference>
<dbReference type="GO" id="GO:0006164">
    <property type="term" value="P:purine nucleotide biosynthetic process"/>
    <property type="evidence" value="ECO:0007669"/>
    <property type="project" value="UniProtKB-KW"/>
</dbReference>
<dbReference type="GO" id="GO:0035999">
    <property type="term" value="P:tetrahydrofolate interconversion"/>
    <property type="evidence" value="ECO:0007669"/>
    <property type="project" value="UniProtKB-UniRule"/>
</dbReference>
<dbReference type="CDD" id="cd01080">
    <property type="entry name" value="NAD_bind_m-THF_DH_Cyclohyd"/>
    <property type="match status" value="1"/>
</dbReference>
<dbReference type="FunFam" id="3.40.50.720:FF:000006">
    <property type="entry name" value="Bifunctional protein FolD"/>
    <property type="match status" value="1"/>
</dbReference>
<dbReference type="FunFam" id="3.40.50.10860:FF:000005">
    <property type="entry name" value="C-1-tetrahydrofolate synthase, cytoplasmic, putative"/>
    <property type="match status" value="1"/>
</dbReference>
<dbReference type="Gene3D" id="3.40.50.10860">
    <property type="entry name" value="Leucine Dehydrogenase, chain A, domain 1"/>
    <property type="match status" value="1"/>
</dbReference>
<dbReference type="Gene3D" id="3.40.50.720">
    <property type="entry name" value="NAD(P)-binding Rossmann-like Domain"/>
    <property type="match status" value="1"/>
</dbReference>
<dbReference type="HAMAP" id="MF_01576">
    <property type="entry name" value="THF_DHG_CYH"/>
    <property type="match status" value="1"/>
</dbReference>
<dbReference type="InterPro" id="IPR046346">
    <property type="entry name" value="Aminoacid_DH-like_N_sf"/>
</dbReference>
<dbReference type="InterPro" id="IPR036291">
    <property type="entry name" value="NAD(P)-bd_dom_sf"/>
</dbReference>
<dbReference type="InterPro" id="IPR000672">
    <property type="entry name" value="THF_DH/CycHdrlase"/>
</dbReference>
<dbReference type="InterPro" id="IPR020630">
    <property type="entry name" value="THF_DH/CycHdrlase_cat_dom"/>
</dbReference>
<dbReference type="InterPro" id="IPR020867">
    <property type="entry name" value="THF_DH/CycHdrlase_CS"/>
</dbReference>
<dbReference type="InterPro" id="IPR020631">
    <property type="entry name" value="THF_DH/CycHdrlase_NAD-bd_dom"/>
</dbReference>
<dbReference type="NCBIfam" id="NF008058">
    <property type="entry name" value="PRK10792.1"/>
    <property type="match status" value="1"/>
</dbReference>
<dbReference type="NCBIfam" id="NF010783">
    <property type="entry name" value="PRK14186.1"/>
    <property type="match status" value="1"/>
</dbReference>
<dbReference type="NCBIfam" id="NF010785">
    <property type="entry name" value="PRK14188.1"/>
    <property type="match status" value="1"/>
</dbReference>
<dbReference type="PANTHER" id="PTHR48099:SF5">
    <property type="entry name" value="C-1-TETRAHYDROFOLATE SYNTHASE, CYTOPLASMIC"/>
    <property type="match status" value="1"/>
</dbReference>
<dbReference type="PANTHER" id="PTHR48099">
    <property type="entry name" value="C-1-TETRAHYDROFOLATE SYNTHASE, CYTOPLASMIC-RELATED"/>
    <property type="match status" value="1"/>
</dbReference>
<dbReference type="Pfam" id="PF00763">
    <property type="entry name" value="THF_DHG_CYH"/>
    <property type="match status" value="1"/>
</dbReference>
<dbReference type="Pfam" id="PF02882">
    <property type="entry name" value="THF_DHG_CYH_C"/>
    <property type="match status" value="1"/>
</dbReference>
<dbReference type="PRINTS" id="PR00085">
    <property type="entry name" value="THFDHDRGNASE"/>
</dbReference>
<dbReference type="SUPFAM" id="SSF53223">
    <property type="entry name" value="Aminoacid dehydrogenase-like, N-terminal domain"/>
    <property type="match status" value="1"/>
</dbReference>
<dbReference type="SUPFAM" id="SSF51735">
    <property type="entry name" value="NAD(P)-binding Rossmann-fold domains"/>
    <property type="match status" value="1"/>
</dbReference>
<dbReference type="PROSITE" id="PS00766">
    <property type="entry name" value="THF_DHG_CYH_1"/>
    <property type="match status" value="1"/>
</dbReference>
<dbReference type="PROSITE" id="PS00767">
    <property type="entry name" value="THF_DHG_CYH_2"/>
    <property type="match status" value="1"/>
</dbReference>
<name>FOLD_RHORT</name>
<organism>
    <name type="scientific">Rhodospirillum rubrum (strain ATCC 11170 / ATH 1.1.1 / DSM 467 / LMG 4362 / NCIMB 8255 / S1)</name>
    <dbReference type="NCBI Taxonomy" id="269796"/>
    <lineage>
        <taxon>Bacteria</taxon>
        <taxon>Pseudomonadati</taxon>
        <taxon>Pseudomonadota</taxon>
        <taxon>Alphaproteobacteria</taxon>
        <taxon>Rhodospirillales</taxon>
        <taxon>Rhodospirillaceae</taxon>
        <taxon>Rhodospirillum</taxon>
    </lineage>
</organism>
<gene>
    <name evidence="1" type="primary">folD</name>
    <name type="ordered locus">Rru_A0557</name>
</gene>